<feature type="chain" id="PRO_0000337594" description="Elongation factor Tu, chloroplastic">
    <location>
        <begin position="1"/>
        <end position="410"/>
    </location>
</feature>
<feature type="domain" description="tr-type G">
    <location>
        <begin position="10"/>
        <end position="214"/>
    </location>
</feature>
<feature type="region of interest" description="G1" evidence="1">
    <location>
        <begin position="19"/>
        <end position="26"/>
    </location>
</feature>
<feature type="region of interest" description="G2" evidence="1">
    <location>
        <begin position="60"/>
        <end position="64"/>
    </location>
</feature>
<feature type="region of interest" description="G3" evidence="1">
    <location>
        <begin position="81"/>
        <end position="84"/>
    </location>
</feature>
<feature type="region of interest" description="G4" evidence="1">
    <location>
        <begin position="136"/>
        <end position="139"/>
    </location>
</feature>
<feature type="region of interest" description="G5" evidence="1">
    <location>
        <begin position="174"/>
        <end position="176"/>
    </location>
</feature>
<feature type="binding site" evidence="1">
    <location>
        <begin position="19"/>
        <end position="26"/>
    </location>
    <ligand>
        <name>GTP</name>
        <dbReference type="ChEBI" id="CHEBI:37565"/>
    </ligand>
</feature>
<feature type="binding site" evidence="2">
    <location>
        <position position="26"/>
    </location>
    <ligand>
        <name>Mg(2+)</name>
        <dbReference type="ChEBI" id="CHEBI:18420"/>
    </ligand>
</feature>
<feature type="binding site" evidence="1">
    <location>
        <begin position="81"/>
        <end position="85"/>
    </location>
    <ligand>
        <name>GTP</name>
        <dbReference type="ChEBI" id="CHEBI:37565"/>
    </ligand>
</feature>
<feature type="binding site" evidence="1">
    <location>
        <begin position="136"/>
        <end position="139"/>
    </location>
    <ligand>
        <name>GTP</name>
        <dbReference type="ChEBI" id="CHEBI:37565"/>
    </ligand>
</feature>
<evidence type="ECO:0000250" key="1"/>
<evidence type="ECO:0000255" key="2">
    <source>
        <dbReference type="HAMAP-Rule" id="MF_00118"/>
    </source>
</evidence>
<evidence type="ECO:0000305" key="3"/>
<accession>A2CI56</accession>
<organism>
    <name type="scientific">Chlorokybus atmophyticus</name>
    <name type="common">Soil alga</name>
    <dbReference type="NCBI Taxonomy" id="3144"/>
    <lineage>
        <taxon>Eukaryota</taxon>
        <taxon>Viridiplantae</taxon>
        <taxon>Streptophyta</taxon>
        <taxon>Chlorokybophyceae</taxon>
        <taxon>Chlorokybales</taxon>
        <taxon>Chlorokybaceae</taxon>
        <taxon>Chlorokybus</taxon>
    </lineage>
</organism>
<proteinExistence type="inferred from homology"/>
<reference key="1">
    <citation type="journal article" date="2007" name="BMC Biol.">
        <title>A clade uniting the green algae Mesostigma viride and Chlorokybus atmophyticus represents the deepest branch of the Streptophyta in chloroplast genome-based phylogenies.</title>
        <authorList>
            <person name="Lemieux C."/>
            <person name="Otis C."/>
            <person name="Turmel M."/>
        </authorList>
    </citation>
    <scope>NUCLEOTIDE SEQUENCE [LARGE SCALE GENOMIC DNA]</scope>
    <source>
        <strain>SAG 48.80</strain>
    </source>
</reference>
<dbReference type="EC" id="3.6.5.3" evidence="2"/>
<dbReference type="EMBL" id="DQ422812">
    <property type="protein sequence ID" value="ABM87969.1"/>
    <property type="molecule type" value="Genomic_DNA"/>
</dbReference>
<dbReference type="RefSeq" id="YP_001019139.1">
    <property type="nucleotide sequence ID" value="NC_008822.1"/>
</dbReference>
<dbReference type="SMR" id="A2CI56"/>
<dbReference type="GeneID" id="4783303"/>
<dbReference type="GO" id="GO:0009507">
    <property type="term" value="C:chloroplast"/>
    <property type="evidence" value="ECO:0007669"/>
    <property type="project" value="UniProtKB-SubCell"/>
</dbReference>
<dbReference type="GO" id="GO:0005739">
    <property type="term" value="C:mitochondrion"/>
    <property type="evidence" value="ECO:0007669"/>
    <property type="project" value="TreeGrafter"/>
</dbReference>
<dbReference type="GO" id="GO:0005525">
    <property type="term" value="F:GTP binding"/>
    <property type="evidence" value="ECO:0007669"/>
    <property type="project" value="UniProtKB-UniRule"/>
</dbReference>
<dbReference type="GO" id="GO:0003924">
    <property type="term" value="F:GTPase activity"/>
    <property type="evidence" value="ECO:0007669"/>
    <property type="project" value="InterPro"/>
</dbReference>
<dbReference type="GO" id="GO:0003746">
    <property type="term" value="F:translation elongation factor activity"/>
    <property type="evidence" value="ECO:0007669"/>
    <property type="project" value="UniProtKB-UniRule"/>
</dbReference>
<dbReference type="GO" id="GO:0070125">
    <property type="term" value="P:mitochondrial translational elongation"/>
    <property type="evidence" value="ECO:0007669"/>
    <property type="project" value="TreeGrafter"/>
</dbReference>
<dbReference type="CDD" id="cd01884">
    <property type="entry name" value="EF_Tu"/>
    <property type="match status" value="1"/>
</dbReference>
<dbReference type="CDD" id="cd03697">
    <property type="entry name" value="EFTU_II"/>
    <property type="match status" value="1"/>
</dbReference>
<dbReference type="CDD" id="cd03707">
    <property type="entry name" value="EFTU_III"/>
    <property type="match status" value="1"/>
</dbReference>
<dbReference type="FunFam" id="2.40.30.10:FF:000001">
    <property type="entry name" value="Elongation factor Tu"/>
    <property type="match status" value="1"/>
</dbReference>
<dbReference type="FunFam" id="2.40.30.10:FF:000046">
    <property type="entry name" value="Elongation factor Tu"/>
    <property type="match status" value="1"/>
</dbReference>
<dbReference type="FunFam" id="3.40.50.300:FF:000003">
    <property type="entry name" value="Elongation factor Tu"/>
    <property type="match status" value="1"/>
</dbReference>
<dbReference type="Gene3D" id="3.40.50.300">
    <property type="entry name" value="P-loop containing nucleotide triphosphate hydrolases"/>
    <property type="match status" value="1"/>
</dbReference>
<dbReference type="Gene3D" id="2.40.30.10">
    <property type="entry name" value="Translation factors"/>
    <property type="match status" value="2"/>
</dbReference>
<dbReference type="HAMAP" id="MF_00118_B">
    <property type="entry name" value="EF_Tu_B"/>
    <property type="match status" value="1"/>
</dbReference>
<dbReference type="InterPro" id="IPR041709">
    <property type="entry name" value="EF-Tu_GTP-bd"/>
</dbReference>
<dbReference type="InterPro" id="IPR050055">
    <property type="entry name" value="EF-Tu_GTPase"/>
</dbReference>
<dbReference type="InterPro" id="IPR004161">
    <property type="entry name" value="EFTu-like_2"/>
</dbReference>
<dbReference type="InterPro" id="IPR033720">
    <property type="entry name" value="EFTU_2"/>
</dbReference>
<dbReference type="InterPro" id="IPR031157">
    <property type="entry name" value="G_TR_CS"/>
</dbReference>
<dbReference type="InterPro" id="IPR027417">
    <property type="entry name" value="P-loop_NTPase"/>
</dbReference>
<dbReference type="InterPro" id="IPR005225">
    <property type="entry name" value="Small_GTP-bd"/>
</dbReference>
<dbReference type="InterPro" id="IPR000795">
    <property type="entry name" value="T_Tr_GTP-bd_dom"/>
</dbReference>
<dbReference type="InterPro" id="IPR009000">
    <property type="entry name" value="Transl_B-barrel_sf"/>
</dbReference>
<dbReference type="InterPro" id="IPR009001">
    <property type="entry name" value="Transl_elong_EF1A/Init_IF2_C"/>
</dbReference>
<dbReference type="InterPro" id="IPR004541">
    <property type="entry name" value="Transl_elong_EFTu/EF1A_bac/org"/>
</dbReference>
<dbReference type="InterPro" id="IPR004160">
    <property type="entry name" value="Transl_elong_EFTu/EF1A_C"/>
</dbReference>
<dbReference type="NCBIfam" id="TIGR00485">
    <property type="entry name" value="EF-Tu"/>
    <property type="match status" value="1"/>
</dbReference>
<dbReference type="NCBIfam" id="NF000766">
    <property type="entry name" value="PRK00049.1"/>
    <property type="match status" value="1"/>
</dbReference>
<dbReference type="NCBIfam" id="NF009372">
    <property type="entry name" value="PRK12735.1"/>
    <property type="match status" value="1"/>
</dbReference>
<dbReference type="NCBIfam" id="NF009373">
    <property type="entry name" value="PRK12736.1"/>
    <property type="match status" value="1"/>
</dbReference>
<dbReference type="NCBIfam" id="TIGR00231">
    <property type="entry name" value="small_GTP"/>
    <property type="match status" value="1"/>
</dbReference>
<dbReference type="PANTHER" id="PTHR43721:SF5">
    <property type="entry name" value="ELONGATION FACTOR TU, CHLOROPLASTIC"/>
    <property type="match status" value="1"/>
</dbReference>
<dbReference type="PANTHER" id="PTHR43721">
    <property type="entry name" value="ELONGATION FACTOR TU-RELATED"/>
    <property type="match status" value="1"/>
</dbReference>
<dbReference type="Pfam" id="PF00009">
    <property type="entry name" value="GTP_EFTU"/>
    <property type="match status" value="1"/>
</dbReference>
<dbReference type="Pfam" id="PF03144">
    <property type="entry name" value="GTP_EFTU_D2"/>
    <property type="match status" value="1"/>
</dbReference>
<dbReference type="Pfam" id="PF03143">
    <property type="entry name" value="GTP_EFTU_D3"/>
    <property type="match status" value="1"/>
</dbReference>
<dbReference type="PRINTS" id="PR00315">
    <property type="entry name" value="ELONGATNFCT"/>
</dbReference>
<dbReference type="SUPFAM" id="SSF50465">
    <property type="entry name" value="EF-Tu/eEF-1alpha/eIF2-gamma C-terminal domain"/>
    <property type="match status" value="1"/>
</dbReference>
<dbReference type="SUPFAM" id="SSF52540">
    <property type="entry name" value="P-loop containing nucleoside triphosphate hydrolases"/>
    <property type="match status" value="1"/>
</dbReference>
<dbReference type="SUPFAM" id="SSF50447">
    <property type="entry name" value="Translation proteins"/>
    <property type="match status" value="1"/>
</dbReference>
<dbReference type="PROSITE" id="PS00301">
    <property type="entry name" value="G_TR_1"/>
    <property type="match status" value="1"/>
</dbReference>
<dbReference type="PROSITE" id="PS51722">
    <property type="entry name" value="G_TR_2"/>
    <property type="match status" value="1"/>
</dbReference>
<sequence length="410" mass="44939">MAREKFERKKPHVNIGTIGHVDHGKTTLTAAITMALAASTGAKGKRYDEIDAAPEERARGITINTAHVEYETEKRHYAHVDCPGHADYVKNMITGAAQMDGAILVVSGADGPMPQTKEHILLAKQVGVPNVVVFLNKEDQVDDAELLELVELEVRETLSDYDFPGDEVPVVAGSALLALESLTQNPKIVKGENKWVDKIYSLMDQVDAYIPTPERDTDKPFLMAVEDVFSITGRGTVATGRVERGTVKVGEAIEIVGLREAPVTSIVTGLEMFQKTLEESVAGDNVGILLRGIQKKDIERGMVLAKPGTIKPHKSFEAQVYILNKEEGGRHTPFFQGYRPQFYVRTTDVTGKIESFQADDGSETQMVMPGDRIKMVVQLIQPIAIEKGMRFAIREGGRTVGAGVVFNILE</sequence>
<comment type="function">
    <text evidence="2">GTP hydrolase that promotes the GTP-dependent binding of aminoacyl-tRNA to the A-site of ribosomes during protein biosynthesis.</text>
</comment>
<comment type="catalytic activity">
    <reaction evidence="2">
        <text>GTP + H2O = GDP + phosphate + H(+)</text>
        <dbReference type="Rhea" id="RHEA:19669"/>
        <dbReference type="ChEBI" id="CHEBI:15377"/>
        <dbReference type="ChEBI" id="CHEBI:15378"/>
        <dbReference type="ChEBI" id="CHEBI:37565"/>
        <dbReference type="ChEBI" id="CHEBI:43474"/>
        <dbReference type="ChEBI" id="CHEBI:58189"/>
        <dbReference type="EC" id="3.6.5.3"/>
    </reaction>
    <physiologicalReaction direction="left-to-right" evidence="2">
        <dbReference type="Rhea" id="RHEA:19670"/>
    </physiologicalReaction>
</comment>
<comment type="subcellular location">
    <subcellularLocation>
        <location>Plastid</location>
        <location>Chloroplast</location>
    </subcellularLocation>
</comment>
<comment type="similarity">
    <text evidence="3">Belongs to the TRAFAC class translation factor GTPase superfamily. Classic translation factor GTPase family. EF-Tu/EF-1A subfamily.</text>
</comment>
<gene>
    <name type="primary">tufA</name>
</gene>
<keyword id="KW-0150">Chloroplast</keyword>
<keyword id="KW-0251">Elongation factor</keyword>
<keyword id="KW-0342">GTP-binding</keyword>
<keyword id="KW-0378">Hydrolase</keyword>
<keyword id="KW-0460">Magnesium</keyword>
<keyword id="KW-0479">Metal-binding</keyword>
<keyword id="KW-0547">Nucleotide-binding</keyword>
<keyword id="KW-0934">Plastid</keyword>
<keyword id="KW-0648">Protein biosynthesis</keyword>
<protein>
    <recommendedName>
        <fullName>Elongation factor Tu, chloroplastic</fullName>
        <shortName>EF-Tu</shortName>
        <ecNumber evidence="2">3.6.5.3</ecNumber>
    </recommendedName>
</protein>
<geneLocation type="chloroplast"/>
<name>EFTU_CHLAT</name>